<comment type="function">
    <text evidence="1">Phosphorolytic 3'-5' exoribonuclease that plays an important role in tRNA 3'-end maturation. Removes nucleotide residues following the 3'-CCA terminus of tRNAs; can also add nucleotides to the ends of RNA molecules by using nucleoside diphosphates as substrates, but this may not be physiologically important. Probably plays a role in initiation of 16S rRNA degradation (leading to ribosome degradation) during starvation.</text>
</comment>
<comment type="catalytic activity">
    <reaction evidence="1">
        <text>tRNA(n+1) + phosphate = tRNA(n) + a ribonucleoside 5'-diphosphate</text>
        <dbReference type="Rhea" id="RHEA:10628"/>
        <dbReference type="Rhea" id="RHEA-COMP:17343"/>
        <dbReference type="Rhea" id="RHEA-COMP:17344"/>
        <dbReference type="ChEBI" id="CHEBI:43474"/>
        <dbReference type="ChEBI" id="CHEBI:57930"/>
        <dbReference type="ChEBI" id="CHEBI:173114"/>
        <dbReference type="EC" id="2.7.7.56"/>
    </reaction>
</comment>
<comment type="subunit">
    <text evidence="1">Homohexameric ring arranged as a trimer of dimers.</text>
</comment>
<comment type="similarity">
    <text evidence="1">Belongs to the RNase PH family.</text>
</comment>
<evidence type="ECO:0000255" key="1">
    <source>
        <dbReference type="HAMAP-Rule" id="MF_00564"/>
    </source>
</evidence>
<keyword id="KW-0548">Nucleotidyltransferase</keyword>
<keyword id="KW-1185">Reference proteome</keyword>
<keyword id="KW-0694">RNA-binding</keyword>
<keyword id="KW-0698">rRNA processing</keyword>
<keyword id="KW-0808">Transferase</keyword>
<keyword id="KW-0819">tRNA processing</keyword>
<keyword id="KW-0820">tRNA-binding</keyword>
<sequence length="259" mass="27381">MSKREDGRLDHELRPVIITRGFTENPAGSVLIEFGHTKVLCTASVTEGVPRWRKATGLGWLTAEYAMLPSATHSRSDRESVRGRLSGRTQEISRLISRSLRACIDLAALGENTIAIDCDVLQADGGTRTAAITGAYVALADAVTYLSAAGKLSDPRPLSCAIAAVSVGVVDGRIRVDLPYEEDSRAEVDMNVVATDTGTLVEIQGTGEGATFARSTLDKLLDMALGACDTLFAAQRDALALPYPGVLPQGPPPPKAFGT</sequence>
<reference key="1">
    <citation type="journal article" date="2003" name="Proc. Natl. Acad. Sci. U.S.A.">
        <title>The complete genome sequence of Mycobacterium bovis.</title>
        <authorList>
            <person name="Garnier T."/>
            <person name="Eiglmeier K."/>
            <person name="Camus J.-C."/>
            <person name="Medina N."/>
            <person name="Mansoor H."/>
            <person name="Pryor M."/>
            <person name="Duthoy S."/>
            <person name="Grondin S."/>
            <person name="Lacroix C."/>
            <person name="Monsempe C."/>
            <person name="Simon S."/>
            <person name="Harris B."/>
            <person name="Atkin R."/>
            <person name="Doggett J."/>
            <person name="Mayes R."/>
            <person name="Keating L."/>
            <person name="Wheeler P.R."/>
            <person name="Parkhill J."/>
            <person name="Barrell B.G."/>
            <person name="Cole S.T."/>
            <person name="Gordon S.V."/>
            <person name="Hewinson R.G."/>
        </authorList>
    </citation>
    <scope>NUCLEOTIDE SEQUENCE [LARGE SCALE GENOMIC DNA]</scope>
    <source>
        <strain>ATCC BAA-935 / AF2122/97</strain>
    </source>
</reference>
<reference key="2">
    <citation type="journal article" date="2017" name="Genome Announc.">
        <title>Updated reference genome sequence and annotation of Mycobacterium bovis AF2122/97.</title>
        <authorList>
            <person name="Malone K.M."/>
            <person name="Farrell D."/>
            <person name="Stuber T.P."/>
            <person name="Schubert O.T."/>
            <person name="Aebersold R."/>
            <person name="Robbe-Austerman S."/>
            <person name="Gordon S.V."/>
        </authorList>
    </citation>
    <scope>NUCLEOTIDE SEQUENCE [LARGE SCALE GENOMIC DNA]</scope>
    <scope>GENOME REANNOTATION</scope>
    <source>
        <strain>ATCC BAA-935 / AF2122/97</strain>
    </source>
</reference>
<gene>
    <name evidence="1" type="primary">rph</name>
    <name type="synonym">rphA</name>
    <name type="ordered locus">BQ2027_MB1375</name>
</gene>
<feature type="chain" id="PRO_0000139909" description="Ribonuclease PH">
    <location>
        <begin position="1"/>
        <end position="259"/>
    </location>
</feature>
<feature type="binding site" evidence="1">
    <location>
        <position position="88"/>
    </location>
    <ligand>
        <name>phosphate</name>
        <dbReference type="ChEBI" id="CHEBI:43474"/>
        <note>substrate</note>
    </ligand>
</feature>
<feature type="binding site" evidence="1">
    <location>
        <begin position="126"/>
        <end position="128"/>
    </location>
    <ligand>
        <name>phosphate</name>
        <dbReference type="ChEBI" id="CHEBI:43474"/>
        <note>substrate</note>
    </ligand>
</feature>
<accession>Q7U076</accession>
<accession>A0A1R3XY28</accession>
<accession>X2BHE6</accession>
<name>RNPH_MYCBO</name>
<dbReference type="EC" id="2.7.7.56" evidence="1"/>
<dbReference type="EMBL" id="LT708304">
    <property type="protein sequence ID" value="SIT99978.1"/>
    <property type="molecule type" value="Genomic_DNA"/>
</dbReference>
<dbReference type="RefSeq" id="NP_855029.1">
    <property type="nucleotide sequence ID" value="NC_002945.3"/>
</dbReference>
<dbReference type="RefSeq" id="WP_010950527.1">
    <property type="nucleotide sequence ID" value="NC_002945.4"/>
</dbReference>
<dbReference type="SMR" id="Q7U076"/>
<dbReference type="KEGG" id="mbo:BQ2027_MB1375"/>
<dbReference type="PATRIC" id="fig|233413.5.peg.1507"/>
<dbReference type="Proteomes" id="UP000001419">
    <property type="component" value="Chromosome"/>
</dbReference>
<dbReference type="GO" id="GO:0000175">
    <property type="term" value="F:3'-5'-RNA exonuclease activity"/>
    <property type="evidence" value="ECO:0007669"/>
    <property type="project" value="UniProtKB-UniRule"/>
</dbReference>
<dbReference type="GO" id="GO:0000049">
    <property type="term" value="F:tRNA binding"/>
    <property type="evidence" value="ECO:0007669"/>
    <property type="project" value="UniProtKB-UniRule"/>
</dbReference>
<dbReference type="GO" id="GO:0009022">
    <property type="term" value="F:tRNA nucleotidyltransferase activity"/>
    <property type="evidence" value="ECO:0007669"/>
    <property type="project" value="UniProtKB-UniRule"/>
</dbReference>
<dbReference type="GO" id="GO:0016075">
    <property type="term" value="P:rRNA catabolic process"/>
    <property type="evidence" value="ECO:0007669"/>
    <property type="project" value="UniProtKB-UniRule"/>
</dbReference>
<dbReference type="GO" id="GO:0006364">
    <property type="term" value="P:rRNA processing"/>
    <property type="evidence" value="ECO:0007669"/>
    <property type="project" value="UniProtKB-KW"/>
</dbReference>
<dbReference type="GO" id="GO:0008033">
    <property type="term" value="P:tRNA processing"/>
    <property type="evidence" value="ECO:0007669"/>
    <property type="project" value="UniProtKB-UniRule"/>
</dbReference>
<dbReference type="CDD" id="cd11362">
    <property type="entry name" value="RNase_PH_bact"/>
    <property type="match status" value="1"/>
</dbReference>
<dbReference type="FunFam" id="3.30.230.70:FF:000003">
    <property type="entry name" value="Ribonuclease PH"/>
    <property type="match status" value="1"/>
</dbReference>
<dbReference type="Gene3D" id="3.30.230.70">
    <property type="entry name" value="GHMP Kinase, N-terminal domain"/>
    <property type="match status" value="1"/>
</dbReference>
<dbReference type="HAMAP" id="MF_00564">
    <property type="entry name" value="RNase_PH"/>
    <property type="match status" value="1"/>
</dbReference>
<dbReference type="InterPro" id="IPR001247">
    <property type="entry name" value="ExoRNase_PH_dom1"/>
</dbReference>
<dbReference type="InterPro" id="IPR015847">
    <property type="entry name" value="ExoRNase_PH_dom2"/>
</dbReference>
<dbReference type="InterPro" id="IPR036345">
    <property type="entry name" value="ExoRNase_PH_dom2_sf"/>
</dbReference>
<dbReference type="InterPro" id="IPR027408">
    <property type="entry name" value="PNPase/RNase_PH_dom_sf"/>
</dbReference>
<dbReference type="InterPro" id="IPR020568">
    <property type="entry name" value="Ribosomal_Su5_D2-typ_SF"/>
</dbReference>
<dbReference type="InterPro" id="IPR050080">
    <property type="entry name" value="RNase_PH"/>
</dbReference>
<dbReference type="InterPro" id="IPR002381">
    <property type="entry name" value="RNase_PH_bac-type"/>
</dbReference>
<dbReference type="InterPro" id="IPR018336">
    <property type="entry name" value="RNase_PH_CS"/>
</dbReference>
<dbReference type="NCBIfam" id="TIGR01966">
    <property type="entry name" value="RNasePH"/>
    <property type="match status" value="1"/>
</dbReference>
<dbReference type="PANTHER" id="PTHR11953">
    <property type="entry name" value="EXOSOME COMPLEX COMPONENT"/>
    <property type="match status" value="1"/>
</dbReference>
<dbReference type="PANTHER" id="PTHR11953:SF0">
    <property type="entry name" value="EXOSOME COMPLEX COMPONENT RRP41"/>
    <property type="match status" value="1"/>
</dbReference>
<dbReference type="Pfam" id="PF01138">
    <property type="entry name" value="RNase_PH"/>
    <property type="match status" value="1"/>
</dbReference>
<dbReference type="Pfam" id="PF03725">
    <property type="entry name" value="RNase_PH_C"/>
    <property type="match status" value="1"/>
</dbReference>
<dbReference type="SUPFAM" id="SSF55666">
    <property type="entry name" value="Ribonuclease PH domain 2-like"/>
    <property type="match status" value="1"/>
</dbReference>
<dbReference type="SUPFAM" id="SSF54211">
    <property type="entry name" value="Ribosomal protein S5 domain 2-like"/>
    <property type="match status" value="1"/>
</dbReference>
<dbReference type="PROSITE" id="PS01277">
    <property type="entry name" value="RIBONUCLEASE_PH"/>
    <property type="match status" value="1"/>
</dbReference>
<protein>
    <recommendedName>
        <fullName evidence="1">Ribonuclease PH</fullName>
        <shortName evidence="1">RNase PH</shortName>
        <ecNumber evidence="1">2.7.7.56</ecNumber>
    </recommendedName>
    <alternativeName>
        <fullName evidence="1">tRNA nucleotidyltransferase</fullName>
    </alternativeName>
</protein>
<proteinExistence type="inferred from homology"/>
<organism>
    <name type="scientific">Mycobacterium bovis (strain ATCC BAA-935 / AF2122/97)</name>
    <dbReference type="NCBI Taxonomy" id="233413"/>
    <lineage>
        <taxon>Bacteria</taxon>
        <taxon>Bacillati</taxon>
        <taxon>Actinomycetota</taxon>
        <taxon>Actinomycetes</taxon>
        <taxon>Mycobacteriales</taxon>
        <taxon>Mycobacteriaceae</taxon>
        <taxon>Mycobacterium</taxon>
        <taxon>Mycobacterium tuberculosis complex</taxon>
    </lineage>
</organism>